<sequence>MGSTSSLYAAIDLGSNSFHMLVVREVAGSIQTLTRIKRKVRLAAGLNSENALSNEAMERGWQCLRLFAERLQDIPPSQIRVVATATLRLAVNAGDFIAKAQEILGCPVQVISGEEEARLIYQGVAHTTGGADQRLVVDIGGASTELVTGTGAQTTSLFSLSMGCVTWLERYFADRNLGQENFDAAEKAAREVLRPVADELRYHGWKVCVGASGTVQALQEIMMAQGMDERITLEKLQQLKQRAIHCGRLEELEIDGLTLERALVFPSGLAILIAIFTELNIQCMTLAGGALREGLVYGMLHLAVEQDIRSRTLRNIQRRFMIDIDQAQRVAKVAANFFDQVENEWHLEAISRDLLISACQLHEIGLSVDFKQAPQHAAYLVRNLDLPGFTPAQKKLLATLLLNQTNPIDLSSLHQQNAVPPRVAEQLCRLLRLAIIFASRRRDDLVPEMTLKANHELLTLTLPQGWLTQHPLGKEIIDQESQWQSYVHWPLEVH</sequence>
<name>GPPA_ESCF3</name>
<evidence type="ECO:0000255" key="1">
    <source>
        <dbReference type="HAMAP-Rule" id="MF_01550"/>
    </source>
</evidence>
<feature type="chain" id="PRO_1000146873" description="Guanosine-5'-triphosphate,3'-diphosphate pyrophosphatase">
    <location>
        <begin position="1"/>
        <end position="494"/>
    </location>
</feature>
<gene>
    <name evidence="1" type="primary">gppA</name>
    <name type="ordered locus">EFER_3725</name>
</gene>
<protein>
    <recommendedName>
        <fullName evidence="1">Guanosine-5'-triphosphate,3'-diphosphate pyrophosphatase</fullName>
        <ecNumber evidence="1">3.6.1.40</ecNumber>
    </recommendedName>
    <alternativeName>
        <fullName evidence="1">Guanosine pentaphosphate phosphohydrolase</fullName>
    </alternativeName>
    <alternativeName>
        <fullName evidence="1">pppGpp-5'-phosphohydrolase</fullName>
    </alternativeName>
</protein>
<dbReference type="EC" id="3.6.1.40" evidence="1"/>
<dbReference type="EMBL" id="CU928158">
    <property type="protein sequence ID" value="CAQ91185.1"/>
    <property type="molecule type" value="Genomic_DNA"/>
</dbReference>
<dbReference type="RefSeq" id="WP_001355380.1">
    <property type="nucleotide sequence ID" value="NC_011740.1"/>
</dbReference>
<dbReference type="SMR" id="B7LU76"/>
<dbReference type="GeneID" id="75059668"/>
<dbReference type="KEGG" id="efe:EFER_3725"/>
<dbReference type="HOGENOM" id="CLU_025908_4_0_6"/>
<dbReference type="OrthoDB" id="9793035at2"/>
<dbReference type="UniPathway" id="UPA00908">
    <property type="reaction ID" value="UER00885"/>
</dbReference>
<dbReference type="Proteomes" id="UP000000745">
    <property type="component" value="Chromosome"/>
</dbReference>
<dbReference type="GO" id="GO:0008894">
    <property type="term" value="F:guanosine-5'-triphosphate,3'-diphosphate diphosphatase activity"/>
    <property type="evidence" value="ECO:0007669"/>
    <property type="project" value="UniProtKB-UniRule"/>
</dbReference>
<dbReference type="GO" id="GO:0015974">
    <property type="term" value="P:guanosine pentaphosphate catabolic process"/>
    <property type="evidence" value="ECO:0007669"/>
    <property type="project" value="InterPro"/>
</dbReference>
<dbReference type="GO" id="GO:0015970">
    <property type="term" value="P:guanosine tetraphosphate biosynthetic process"/>
    <property type="evidence" value="ECO:0007669"/>
    <property type="project" value="UniProtKB-UniRule"/>
</dbReference>
<dbReference type="GO" id="GO:0015949">
    <property type="term" value="P:nucleobase-containing small molecule interconversion"/>
    <property type="evidence" value="ECO:0007669"/>
    <property type="project" value="TreeGrafter"/>
</dbReference>
<dbReference type="CDD" id="cd24117">
    <property type="entry name" value="ASKHA_NBD_EcGppA-like"/>
    <property type="match status" value="1"/>
</dbReference>
<dbReference type="FunFam" id="1.10.3210.10:FF:000004">
    <property type="entry name" value="Guanosine-5'-triphosphate,3'-diphosphate pyrophosphatase"/>
    <property type="match status" value="1"/>
</dbReference>
<dbReference type="FunFam" id="3.30.420.150:FF:000001">
    <property type="entry name" value="Guanosine-5'-triphosphate,3'-diphosphate pyrophosphatase"/>
    <property type="match status" value="1"/>
</dbReference>
<dbReference type="FunFam" id="3.30.420.40:FF:000023">
    <property type="entry name" value="Guanosine-5'-triphosphate,3'-diphosphate pyrophosphatase"/>
    <property type="match status" value="1"/>
</dbReference>
<dbReference type="Gene3D" id="3.30.420.40">
    <property type="match status" value="1"/>
</dbReference>
<dbReference type="Gene3D" id="3.30.420.150">
    <property type="entry name" value="Exopolyphosphatase. Domain 2"/>
    <property type="match status" value="1"/>
</dbReference>
<dbReference type="Gene3D" id="1.10.3210.10">
    <property type="entry name" value="Hypothetical protein af1432"/>
    <property type="match status" value="1"/>
</dbReference>
<dbReference type="HAMAP" id="MF_01550">
    <property type="entry name" value="GppA"/>
    <property type="match status" value="1"/>
</dbReference>
<dbReference type="InterPro" id="IPR043129">
    <property type="entry name" value="ATPase_NBD"/>
</dbReference>
<dbReference type="InterPro" id="IPR050273">
    <property type="entry name" value="GppA/Ppx_hydrolase"/>
</dbReference>
<dbReference type="InterPro" id="IPR023709">
    <property type="entry name" value="Guo-5TP_3DP_PyrP"/>
</dbReference>
<dbReference type="InterPro" id="IPR048950">
    <property type="entry name" value="Ppx_GppA_C"/>
</dbReference>
<dbReference type="InterPro" id="IPR003695">
    <property type="entry name" value="Ppx_GppA_N"/>
</dbReference>
<dbReference type="InterPro" id="IPR030673">
    <property type="entry name" value="PyroPPase_GppA_Ppx"/>
</dbReference>
<dbReference type="NCBIfam" id="NF008260">
    <property type="entry name" value="PRK11031.1"/>
    <property type="match status" value="1"/>
</dbReference>
<dbReference type="PANTHER" id="PTHR30005">
    <property type="entry name" value="EXOPOLYPHOSPHATASE"/>
    <property type="match status" value="1"/>
</dbReference>
<dbReference type="PANTHER" id="PTHR30005:SF0">
    <property type="entry name" value="RETROGRADE REGULATION PROTEIN 2"/>
    <property type="match status" value="1"/>
</dbReference>
<dbReference type="Pfam" id="PF02541">
    <property type="entry name" value="Ppx-GppA"/>
    <property type="match status" value="1"/>
</dbReference>
<dbReference type="Pfam" id="PF21447">
    <property type="entry name" value="Ppx-GppA_III"/>
    <property type="match status" value="1"/>
</dbReference>
<dbReference type="PIRSF" id="PIRSF001267">
    <property type="entry name" value="Pyrophosphatase_GppA_Ppx"/>
    <property type="match status" value="1"/>
</dbReference>
<dbReference type="SUPFAM" id="SSF53067">
    <property type="entry name" value="Actin-like ATPase domain"/>
    <property type="match status" value="2"/>
</dbReference>
<dbReference type="SUPFAM" id="SSF109604">
    <property type="entry name" value="HD-domain/PDEase-like"/>
    <property type="match status" value="1"/>
</dbReference>
<reference key="1">
    <citation type="journal article" date="2009" name="PLoS Genet.">
        <title>Organised genome dynamics in the Escherichia coli species results in highly diverse adaptive paths.</title>
        <authorList>
            <person name="Touchon M."/>
            <person name="Hoede C."/>
            <person name="Tenaillon O."/>
            <person name="Barbe V."/>
            <person name="Baeriswyl S."/>
            <person name="Bidet P."/>
            <person name="Bingen E."/>
            <person name="Bonacorsi S."/>
            <person name="Bouchier C."/>
            <person name="Bouvet O."/>
            <person name="Calteau A."/>
            <person name="Chiapello H."/>
            <person name="Clermont O."/>
            <person name="Cruveiller S."/>
            <person name="Danchin A."/>
            <person name="Diard M."/>
            <person name="Dossat C."/>
            <person name="Karoui M.E."/>
            <person name="Frapy E."/>
            <person name="Garry L."/>
            <person name="Ghigo J.M."/>
            <person name="Gilles A.M."/>
            <person name="Johnson J."/>
            <person name="Le Bouguenec C."/>
            <person name="Lescat M."/>
            <person name="Mangenot S."/>
            <person name="Martinez-Jehanne V."/>
            <person name="Matic I."/>
            <person name="Nassif X."/>
            <person name="Oztas S."/>
            <person name="Petit M.A."/>
            <person name="Pichon C."/>
            <person name="Rouy Z."/>
            <person name="Ruf C.S."/>
            <person name="Schneider D."/>
            <person name="Tourret J."/>
            <person name="Vacherie B."/>
            <person name="Vallenet D."/>
            <person name="Medigue C."/>
            <person name="Rocha E.P.C."/>
            <person name="Denamur E."/>
        </authorList>
    </citation>
    <scope>NUCLEOTIDE SEQUENCE [LARGE SCALE GENOMIC DNA]</scope>
    <source>
        <strain>ATCC 35469 / DSM 13698 / BCRC 15582 / CCUG 18766 / IAM 14443 / JCM 21226 / LMG 7866 / NBRC 102419 / NCTC 12128 / CDC 0568-73</strain>
    </source>
</reference>
<keyword id="KW-0378">Hydrolase</keyword>
<proteinExistence type="inferred from homology"/>
<accession>B7LU76</accession>
<organism>
    <name type="scientific">Escherichia fergusonii (strain ATCC 35469 / DSM 13698 / CCUG 18766 / IAM 14443 / JCM 21226 / LMG 7866 / NBRC 102419 / NCTC 12128 / CDC 0568-73)</name>
    <dbReference type="NCBI Taxonomy" id="585054"/>
    <lineage>
        <taxon>Bacteria</taxon>
        <taxon>Pseudomonadati</taxon>
        <taxon>Pseudomonadota</taxon>
        <taxon>Gammaproteobacteria</taxon>
        <taxon>Enterobacterales</taxon>
        <taxon>Enterobacteriaceae</taxon>
        <taxon>Escherichia</taxon>
    </lineage>
</organism>
<comment type="function">
    <text evidence="1">Catalyzes the conversion of pppGpp to ppGpp. Guanosine pentaphosphate (pppGpp) is a cytoplasmic signaling molecule which together with ppGpp controls the 'stringent response', an adaptive process that allows bacteria to respond to amino acid starvation, resulting in the coordinated regulation of numerous cellular activities.</text>
</comment>
<comment type="catalytic activity">
    <reaction evidence="1">
        <text>guanosine 3'-diphosphate 5'-triphosphate + H2O = guanosine 3',5'-bis(diphosphate) + phosphate + H(+)</text>
        <dbReference type="Rhea" id="RHEA:13073"/>
        <dbReference type="ChEBI" id="CHEBI:15377"/>
        <dbReference type="ChEBI" id="CHEBI:15378"/>
        <dbReference type="ChEBI" id="CHEBI:43474"/>
        <dbReference type="ChEBI" id="CHEBI:77828"/>
        <dbReference type="ChEBI" id="CHEBI:142410"/>
        <dbReference type="EC" id="3.6.1.40"/>
    </reaction>
</comment>
<comment type="pathway">
    <text evidence="1">Purine metabolism; ppGpp biosynthesis; ppGpp from GTP: step 2/2.</text>
</comment>
<comment type="similarity">
    <text evidence="1">Belongs to the GppA/Ppx family. GppA subfamily.</text>
</comment>